<name>SUCC_STAAC</name>
<reference key="1">
    <citation type="journal article" date="2005" name="J. Bacteriol.">
        <title>Insights on evolution of virulence and resistance from the complete genome analysis of an early methicillin-resistant Staphylococcus aureus strain and a biofilm-producing methicillin-resistant Staphylococcus epidermidis strain.</title>
        <authorList>
            <person name="Gill S.R."/>
            <person name="Fouts D.E."/>
            <person name="Archer G.L."/>
            <person name="Mongodin E.F."/>
            <person name="DeBoy R.T."/>
            <person name="Ravel J."/>
            <person name="Paulsen I.T."/>
            <person name="Kolonay J.F."/>
            <person name="Brinkac L.M."/>
            <person name="Beanan M.J."/>
            <person name="Dodson R.J."/>
            <person name="Daugherty S.C."/>
            <person name="Madupu R."/>
            <person name="Angiuoli S.V."/>
            <person name="Durkin A.S."/>
            <person name="Haft D.H."/>
            <person name="Vamathevan J.J."/>
            <person name="Khouri H."/>
            <person name="Utterback T.R."/>
            <person name="Lee C."/>
            <person name="Dimitrov G."/>
            <person name="Jiang L."/>
            <person name="Qin H."/>
            <person name="Weidman J."/>
            <person name="Tran K."/>
            <person name="Kang K.H."/>
            <person name="Hance I.R."/>
            <person name="Nelson K.E."/>
            <person name="Fraser C.M."/>
        </authorList>
    </citation>
    <scope>NUCLEOTIDE SEQUENCE [LARGE SCALE GENOMIC DNA]</scope>
    <source>
        <strain>COL</strain>
    </source>
</reference>
<sequence length="388" mass="42056">MNIHEYQGKEIFRSMGVAVPEGRVAFTAEEAVEKAKELNSDVYVVKAQIHAGGRGKAGGVKIAKSLSEVETYAKELLGKTLVTHQTGPEGKEIKRLYIEEGCAIQKEYYVGFVIDRATDQVTLMASEEGGTEIEEVAAKTPEKIFKETIDPVIGLSPFQARRIAFNINIPKESVNKAAKFLLALYNVFIEKDCSIVEINPLVTTADGDVLALDAKINFDDNALFRHKDVVELRDLEEEDPKEIEASKHDLSYIALDGDIGCMVNGAGLAMATMDTINHFGGNPANFLDAGGSATREKVTEAFKIILGDENVKGIFVNIFGGIMKCDVIAEGIVEAVKEVDLTLPLVVRLEGTNVELGKKILKDSGLAIEPAATMAEGAQKIVKLVKEA</sequence>
<comment type="function">
    <text evidence="1">Succinyl-CoA synthetase functions in the citric acid cycle (TCA), coupling the hydrolysis of succinyl-CoA to the synthesis of either ATP or GTP and thus represents the only step of substrate-level phosphorylation in the TCA. The beta subunit provides nucleotide specificity of the enzyme and binds the substrate succinate, while the binding sites for coenzyme A and phosphate are found in the alpha subunit.</text>
</comment>
<comment type="catalytic activity">
    <reaction evidence="1">
        <text>succinate + ATP + CoA = succinyl-CoA + ADP + phosphate</text>
        <dbReference type="Rhea" id="RHEA:17661"/>
        <dbReference type="ChEBI" id="CHEBI:30031"/>
        <dbReference type="ChEBI" id="CHEBI:30616"/>
        <dbReference type="ChEBI" id="CHEBI:43474"/>
        <dbReference type="ChEBI" id="CHEBI:57287"/>
        <dbReference type="ChEBI" id="CHEBI:57292"/>
        <dbReference type="ChEBI" id="CHEBI:456216"/>
        <dbReference type="EC" id="6.2.1.5"/>
    </reaction>
    <physiologicalReaction direction="right-to-left" evidence="1">
        <dbReference type="Rhea" id="RHEA:17663"/>
    </physiologicalReaction>
</comment>
<comment type="catalytic activity">
    <reaction evidence="1">
        <text>GTP + succinate + CoA = succinyl-CoA + GDP + phosphate</text>
        <dbReference type="Rhea" id="RHEA:22120"/>
        <dbReference type="ChEBI" id="CHEBI:30031"/>
        <dbReference type="ChEBI" id="CHEBI:37565"/>
        <dbReference type="ChEBI" id="CHEBI:43474"/>
        <dbReference type="ChEBI" id="CHEBI:57287"/>
        <dbReference type="ChEBI" id="CHEBI:57292"/>
        <dbReference type="ChEBI" id="CHEBI:58189"/>
    </reaction>
    <physiologicalReaction direction="right-to-left" evidence="1">
        <dbReference type="Rhea" id="RHEA:22122"/>
    </physiologicalReaction>
</comment>
<comment type="cofactor">
    <cofactor evidence="1">
        <name>Mg(2+)</name>
        <dbReference type="ChEBI" id="CHEBI:18420"/>
    </cofactor>
    <text evidence="1">Binds 1 Mg(2+) ion per subunit.</text>
</comment>
<comment type="pathway">
    <text evidence="1">Carbohydrate metabolism; tricarboxylic acid cycle; succinate from succinyl-CoA (ligase route): step 1/1.</text>
</comment>
<comment type="subunit">
    <text evidence="1">Heterotetramer of two alpha and two beta subunits.</text>
</comment>
<comment type="similarity">
    <text evidence="1">Belongs to the succinate/malate CoA ligase beta subunit family.</text>
</comment>
<keyword id="KW-0067">ATP-binding</keyword>
<keyword id="KW-0436">Ligase</keyword>
<keyword id="KW-0460">Magnesium</keyword>
<keyword id="KW-0479">Metal-binding</keyword>
<keyword id="KW-0547">Nucleotide-binding</keyword>
<keyword id="KW-0816">Tricarboxylic acid cycle</keyword>
<proteinExistence type="inferred from homology"/>
<gene>
    <name evidence="1" type="primary">sucC</name>
    <name type="ordered locus">SACOL1262</name>
</gene>
<feature type="chain" id="PRO_0000102859" description="Succinate--CoA ligase [ADP-forming] subunit beta">
    <location>
        <begin position="1"/>
        <end position="388"/>
    </location>
</feature>
<feature type="domain" description="ATP-grasp" evidence="1">
    <location>
        <begin position="9"/>
        <end position="244"/>
    </location>
</feature>
<feature type="binding site" evidence="1">
    <location>
        <position position="46"/>
    </location>
    <ligand>
        <name>ATP</name>
        <dbReference type="ChEBI" id="CHEBI:30616"/>
    </ligand>
</feature>
<feature type="binding site" evidence="1">
    <location>
        <begin position="53"/>
        <end position="55"/>
    </location>
    <ligand>
        <name>ATP</name>
        <dbReference type="ChEBI" id="CHEBI:30616"/>
    </ligand>
</feature>
<feature type="binding site" evidence="1">
    <location>
        <position position="99"/>
    </location>
    <ligand>
        <name>ATP</name>
        <dbReference type="ChEBI" id="CHEBI:30616"/>
    </ligand>
</feature>
<feature type="binding site" evidence="1">
    <location>
        <position position="102"/>
    </location>
    <ligand>
        <name>ATP</name>
        <dbReference type="ChEBI" id="CHEBI:30616"/>
    </ligand>
</feature>
<feature type="binding site" evidence="1">
    <location>
        <position position="107"/>
    </location>
    <ligand>
        <name>ATP</name>
        <dbReference type="ChEBI" id="CHEBI:30616"/>
    </ligand>
</feature>
<feature type="binding site" evidence="1">
    <location>
        <position position="199"/>
    </location>
    <ligand>
        <name>Mg(2+)</name>
        <dbReference type="ChEBI" id="CHEBI:18420"/>
    </ligand>
</feature>
<feature type="binding site" evidence="1">
    <location>
        <position position="213"/>
    </location>
    <ligand>
        <name>Mg(2+)</name>
        <dbReference type="ChEBI" id="CHEBI:18420"/>
    </ligand>
</feature>
<feature type="binding site" evidence="1">
    <location>
        <position position="264"/>
    </location>
    <ligand>
        <name>substrate</name>
        <note>ligand shared with subunit alpha</note>
    </ligand>
</feature>
<feature type="binding site" evidence="1">
    <location>
        <begin position="321"/>
        <end position="323"/>
    </location>
    <ligand>
        <name>substrate</name>
        <note>ligand shared with subunit alpha</note>
    </ligand>
</feature>
<organism>
    <name type="scientific">Staphylococcus aureus (strain COL)</name>
    <dbReference type="NCBI Taxonomy" id="93062"/>
    <lineage>
        <taxon>Bacteria</taxon>
        <taxon>Bacillati</taxon>
        <taxon>Bacillota</taxon>
        <taxon>Bacilli</taxon>
        <taxon>Bacillales</taxon>
        <taxon>Staphylococcaceae</taxon>
        <taxon>Staphylococcus</taxon>
    </lineage>
</organism>
<dbReference type="EC" id="6.2.1.5" evidence="1"/>
<dbReference type="EMBL" id="CP000046">
    <property type="protein sequence ID" value="AAW38094.1"/>
    <property type="molecule type" value="Genomic_DNA"/>
</dbReference>
<dbReference type="RefSeq" id="WP_001020801.1">
    <property type="nucleotide sequence ID" value="NZ_JBGOFO010000002.1"/>
</dbReference>
<dbReference type="SMR" id="Q5HGI7"/>
<dbReference type="KEGG" id="sac:SACOL1262"/>
<dbReference type="HOGENOM" id="CLU_037430_0_2_9"/>
<dbReference type="UniPathway" id="UPA00223">
    <property type="reaction ID" value="UER00999"/>
</dbReference>
<dbReference type="Proteomes" id="UP000000530">
    <property type="component" value="Chromosome"/>
</dbReference>
<dbReference type="GO" id="GO:0005829">
    <property type="term" value="C:cytosol"/>
    <property type="evidence" value="ECO:0007669"/>
    <property type="project" value="TreeGrafter"/>
</dbReference>
<dbReference type="GO" id="GO:0042709">
    <property type="term" value="C:succinate-CoA ligase complex"/>
    <property type="evidence" value="ECO:0007669"/>
    <property type="project" value="TreeGrafter"/>
</dbReference>
<dbReference type="GO" id="GO:0005524">
    <property type="term" value="F:ATP binding"/>
    <property type="evidence" value="ECO:0007669"/>
    <property type="project" value="UniProtKB-UniRule"/>
</dbReference>
<dbReference type="GO" id="GO:0000287">
    <property type="term" value="F:magnesium ion binding"/>
    <property type="evidence" value="ECO:0007669"/>
    <property type="project" value="UniProtKB-UniRule"/>
</dbReference>
<dbReference type="GO" id="GO:0004775">
    <property type="term" value="F:succinate-CoA ligase (ADP-forming) activity"/>
    <property type="evidence" value="ECO:0007669"/>
    <property type="project" value="UniProtKB-UniRule"/>
</dbReference>
<dbReference type="GO" id="GO:0004776">
    <property type="term" value="F:succinate-CoA ligase (GDP-forming) activity"/>
    <property type="evidence" value="ECO:0007669"/>
    <property type="project" value="RHEA"/>
</dbReference>
<dbReference type="GO" id="GO:0006104">
    <property type="term" value="P:succinyl-CoA metabolic process"/>
    <property type="evidence" value="ECO:0007669"/>
    <property type="project" value="TreeGrafter"/>
</dbReference>
<dbReference type="GO" id="GO:0006099">
    <property type="term" value="P:tricarboxylic acid cycle"/>
    <property type="evidence" value="ECO:0007669"/>
    <property type="project" value="UniProtKB-UniRule"/>
</dbReference>
<dbReference type="FunFam" id="3.30.1490.20:FF:000002">
    <property type="entry name" value="Succinate--CoA ligase [ADP-forming] subunit beta"/>
    <property type="match status" value="1"/>
</dbReference>
<dbReference type="FunFam" id="3.30.470.20:FF:000002">
    <property type="entry name" value="Succinate--CoA ligase [ADP-forming] subunit beta"/>
    <property type="match status" value="1"/>
</dbReference>
<dbReference type="FunFam" id="3.40.50.261:FF:000001">
    <property type="entry name" value="Succinate--CoA ligase [ADP-forming] subunit beta"/>
    <property type="match status" value="1"/>
</dbReference>
<dbReference type="Gene3D" id="3.30.1490.20">
    <property type="entry name" value="ATP-grasp fold, A domain"/>
    <property type="match status" value="1"/>
</dbReference>
<dbReference type="Gene3D" id="3.30.470.20">
    <property type="entry name" value="ATP-grasp fold, B domain"/>
    <property type="match status" value="1"/>
</dbReference>
<dbReference type="Gene3D" id="3.40.50.261">
    <property type="entry name" value="Succinyl-CoA synthetase domains"/>
    <property type="match status" value="1"/>
</dbReference>
<dbReference type="HAMAP" id="MF_00558">
    <property type="entry name" value="Succ_CoA_beta"/>
    <property type="match status" value="1"/>
</dbReference>
<dbReference type="InterPro" id="IPR011761">
    <property type="entry name" value="ATP-grasp"/>
</dbReference>
<dbReference type="InterPro" id="IPR013650">
    <property type="entry name" value="ATP-grasp_succ-CoA_synth-type"/>
</dbReference>
<dbReference type="InterPro" id="IPR013815">
    <property type="entry name" value="ATP_grasp_subdomain_1"/>
</dbReference>
<dbReference type="InterPro" id="IPR017866">
    <property type="entry name" value="Succ-CoA_synthase_bsu_CS"/>
</dbReference>
<dbReference type="InterPro" id="IPR005811">
    <property type="entry name" value="SUCC_ACL_C"/>
</dbReference>
<dbReference type="InterPro" id="IPR005809">
    <property type="entry name" value="Succ_CoA_ligase-like_bsu"/>
</dbReference>
<dbReference type="InterPro" id="IPR016102">
    <property type="entry name" value="Succinyl-CoA_synth-like"/>
</dbReference>
<dbReference type="NCBIfam" id="NF001913">
    <property type="entry name" value="PRK00696.1"/>
    <property type="match status" value="1"/>
</dbReference>
<dbReference type="NCBIfam" id="TIGR01016">
    <property type="entry name" value="sucCoAbeta"/>
    <property type="match status" value="1"/>
</dbReference>
<dbReference type="PANTHER" id="PTHR11815:SF10">
    <property type="entry name" value="SUCCINATE--COA LIGASE [GDP-FORMING] SUBUNIT BETA, MITOCHONDRIAL"/>
    <property type="match status" value="1"/>
</dbReference>
<dbReference type="PANTHER" id="PTHR11815">
    <property type="entry name" value="SUCCINYL-COA SYNTHETASE BETA CHAIN"/>
    <property type="match status" value="1"/>
</dbReference>
<dbReference type="Pfam" id="PF08442">
    <property type="entry name" value="ATP-grasp_2"/>
    <property type="match status" value="1"/>
</dbReference>
<dbReference type="Pfam" id="PF00549">
    <property type="entry name" value="Ligase_CoA"/>
    <property type="match status" value="1"/>
</dbReference>
<dbReference type="PIRSF" id="PIRSF001554">
    <property type="entry name" value="SucCS_beta"/>
    <property type="match status" value="1"/>
</dbReference>
<dbReference type="SUPFAM" id="SSF56059">
    <property type="entry name" value="Glutathione synthetase ATP-binding domain-like"/>
    <property type="match status" value="1"/>
</dbReference>
<dbReference type="SUPFAM" id="SSF52210">
    <property type="entry name" value="Succinyl-CoA synthetase domains"/>
    <property type="match status" value="1"/>
</dbReference>
<dbReference type="PROSITE" id="PS50975">
    <property type="entry name" value="ATP_GRASP"/>
    <property type="match status" value="1"/>
</dbReference>
<dbReference type="PROSITE" id="PS01217">
    <property type="entry name" value="SUCCINYL_COA_LIG_3"/>
    <property type="match status" value="1"/>
</dbReference>
<protein>
    <recommendedName>
        <fullName evidence="1">Succinate--CoA ligase [ADP-forming] subunit beta</fullName>
        <ecNumber evidence="1">6.2.1.5</ecNumber>
    </recommendedName>
    <alternativeName>
        <fullName evidence="1">Succinyl-CoA synthetase subunit beta</fullName>
        <shortName evidence="1">SCS-beta</shortName>
    </alternativeName>
</protein>
<evidence type="ECO:0000255" key="1">
    <source>
        <dbReference type="HAMAP-Rule" id="MF_00558"/>
    </source>
</evidence>
<accession>Q5HGI7</accession>